<keyword id="KW-0687">Ribonucleoprotein</keyword>
<keyword id="KW-0689">Ribosomal protein</keyword>
<reference key="1">
    <citation type="journal article" date="2007" name="PLoS ONE">
        <title>Analysis of the neurotoxin complex genes in Clostridium botulinum A1-A4 and B1 strains: BoNT/A3, /Ba4 and /B1 clusters are located within plasmids.</title>
        <authorList>
            <person name="Smith T.J."/>
            <person name="Hill K.K."/>
            <person name="Foley B.T."/>
            <person name="Detter J.C."/>
            <person name="Munk A.C."/>
            <person name="Bruce D.C."/>
            <person name="Doggett N.A."/>
            <person name="Smith L.A."/>
            <person name="Marks J.D."/>
            <person name="Xie G."/>
            <person name="Brettin T.S."/>
        </authorList>
    </citation>
    <scope>NUCLEOTIDE SEQUENCE [LARGE SCALE GENOMIC DNA]</scope>
    <source>
        <strain>Okra / Type B1</strain>
    </source>
</reference>
<dbReference type="EMBL" id="CP000939">
    <property type="protein sequence ID" value="ACA46322.1"/>
    <property type="molecule type" value="Genomic_DNA"/>
</dbReference>
<dbReference type="RefSeq" id="WP_004451027.1">
    <property type="nucleotide sequence ID" value="NC_010516.1"/>
</dbReference>
<dbReference type="SMR" id="B1II79"/>
<dbReference type="GeneID" id="5186703"/>
<dbReference type="KEGG" id="cbb:CLD_2192"/>
<dbReference type="HOGENOM" id="CLU_100590_5_0_9"/>
<dbReference type="Proteomes" id="UP000008541">
    <property type="component" value="Chromosome"/>
</dbReference>
<dbReference type="GO" id="GO:0005737">
    <property type="term" value="C:cytoplasm"/>
    <property type="evidence" value="ECO:0007669"/>
    <property type="project" value="UniProtKB-ARBA"/>
</dbReference>
<dbReference type="GO" id="GO:0015935">
    <property type="term" value="C:small ribosomal subunit"/>
    <property type="evidence" value="ECO:0007669"/>
    <property type="project" value="TreeGrafter"/>
</dbReference>
<dbReference type="GO" id="GO:0003735">
    <property type="term" value="F:structural constituent of ribosome"/>
    <property type="evidence" value="ECO:0007669"/>
    <property type="project" value="InterPro"/>
</dbReference>
<dbReference type="GO" id="GO:0006412">
    <property type="term" value="P:translation"/>
    <property type="evidence" value="ECO:0007669"/>
    <property type="project" value="UniProtKB-UniRule"/>
</dbReference>
<dbReference type="FunFam" id="3.30.1320.10:FF:000002">
    <property type="entry name" value="30S ribosomal protein S16"/>
    <property type="match status" value="1"/>
</dbReference>
<dbReference type="Gene3D" id="3.30.1320.10">
    <property type="match status" value="1"/>
</dbReference>
<dbReference type="HAMAP" id="MF_00385">
    <property type="entry name" value="Ribosomal_bS16"/>
    <property type="match status" value="1"/>
</dbReference>
<dbReference type="InterPro" id="IPR000307">
    <property type="entry name" value="Ribosomal_bS16"/>
</dbReference>
<dbReference type="InterPro" id="IPR020592">
    <property type="entry name" value="Ribosomal_bS16_CS"/>
</dbReference>
<dbReference type="InterPro" id="IPR023803">
    <property type="entry name" value="Ribosomal_bS16_dom_sf"/>
</dbReference>
<dbReference type="NCBIfam" id="TIGR00002">
    <property type="entry name" value="S16"/>
    <property type="match status" value="1"/>
</dbReference>
<dbReference type="PANTHER" id="PTHR12919">
    <property type="entry name" value="30S RIBOSOMAL PROTEIN S16"/>
    <property type="match status" value="1"/>
</dbReference>
<dbReference type="PANTHER" id="PTHR12919:SF20">
    <property type="entry name" value="SMALL RIBOSOMAL SUBUNIT PROTEIN BS16M"/>
    <property type="match status" value="1"/>
</dbReference>
<dbReference type="Pfam" id="PF00886">
    <property type="entry name" value="Ribosomal_S16"/>
    <property type="match status" value="1"/>
</dbReference>
<dbReference type="SUPFAM" id="SSF54565">
    <property type="entry name" value="Ribosomal protein S16"/>
    <property type="match status" value="1"/>
</dbReference>
<dbReference type="PROSITE" id="PS00732">
    <property type="entry name" value="RIBOSOMAL_S16"/>
    <property type="match status" value="1"/>
</dbReference>
<gene>
    <name evidence="1" type="primary">rpsP</name>
    <name type="ordered locus">CLD_2192</name>
</gene>
<comment type="similarity">
    <text evidence="1">Belongs to the bacterial ribosomal protein bS16 family.</text>
</comment>
<protein>
    <recommendedName>
        <fullName evidence="1">Small ribosomal subunit protein bS16</fullName>
    </recommendedName>
    <alternativeName>
        <fullName evidence="2">30S ribosomal protein S16</fullName>
    </alternativeName>
</protein>
<evidence type="ECO:0000255" key="1">
    <source>
        <dbReference type="HAMAP-Rule" id="MF_00385"/>
    </source>
</evidence>
<evidence type="ECO:0000305" key="2"/>
<organism>
    <name type="scientific">Clostridium botulinum (strain Okra / Type B1)</name>
    <dbReference type="NCBI Taxonomy" id="498213"/>
    <lineage>
        <taxon>Bacteria</taxon>
        <taxon>Bacillati</taxon>
        <taxon>Bacillota</taxon>
        <taxon>Clostridia</taxon>
        <taxon>Eubacteriales</taxon>
        <taxon>Clostridiaceae</taxon>
        <taxon>Clostridium</taxon>
    </lineage>
</organism>
<accession>B1II79</accession>
<proteinExistence type="inferred from homology"/>
<feature type="chain" id="PRO_1000196372" description="Small ribosomal subunit protein bS16">
    <location>
        <begin position="1"/>
        <end position="82"/>
    </location>
</feature>
<sequence length="82" mass="9320">MAVKIRLKRMGAKKAPFYRVVVADSRSPRDGRFVEEIGYYNPITEPSTIKLDEEKVQKWIKNGAQPTDTVKKLIEKAGISVK</sequence>
<name>RS16_CLOBK</name>